<reference key="1">
    <citation type="journal article" date="2004" name="Nat. Genet.">
        <title>Evidence in the Legionella pneumophila genome for exploitation of host cell functions and high genome plasticity.</title>
        <authorList>
            <person name="Cazalet C."/>
            <person name="Rusniok C."/>
            <person name="Brueggemann H."/>
            <person name="Zidane N."/>
            <person name="Magnier A."/>
            <person name="Ma L."/>
            <person name="Tichit M."/>
            <person name="Jarraud S."/>
            <person name="Bouchier C."/>
            <person name="Vandenesch F."/>
            <person name="Kunst F."/>
            <person name="Etienne J."/>
            <person name="Glaser P."/>
            <person name="Buchrieser C."/>
        </authorList>
    </citation>
    <scope>NUCLEOTIDE SEQUENCE [LARGE SCALE GENOMIC DNA]</scope>
    <source>
        <strain>Paris</strain>
    </source>
</reference>
<dbReference type="EMBL" id="CR628336">
    <property type="protein sequence ID" value="CAH12687.1"/>
    <property type="molecule type" value="Genomic_DNA"/>
</dbReference>
<dbReference type="SMR" id="Q5X4Y4"/>
<dbReference type="KEGG" id="lpp:lpp1536"/>
<dbReference type="LegioList" id="lpp1536"/>
<dbReference type="HOGENOM" id="CLU_103054_2_2_6"/>
<dbReference type="GO" id="GO:0005737">
    <property type="term" value="C:cytoplasm"/>
    <property type="evidence" value="ECO:0007669"/>
    <property type="project" value="UniProtKB-SubCell"/>
</dbReference>
<dbReference type="GO" id="GO:0006105">
    <property type="term" value="P:succinate metabolic process"/>
    <property type="evidence" value="ECO:0007669"/>
    <property type="project" value="TreeGrafter"/>
</dbReference>
<dbReference type="Gene3D" id="1.10.150.250">
    <property type="entry name" value="Flavinator of succinate dehydrogenase"/>
    <property type="match status" value="1"/>
</dbReference>
<dbReference type="InterPro" id="IPR005631">
    <property type="entry name" value="SDH"/>
</dbReference>
<dbReference type="InterPro" id="IPR036714">
    <property type="entry name" value="SDH_sf"/>
</dbReference>
<dbReference type="InterPro" id="IPR050531">
    <property type="entry name" value="SdhE_FAD_assembly_factor"/>
</dbReference>
<dbReference type="PANTHER" id="PTHR39585">
    <property type="entry name" value="FAD ASSEMBLY FACTOR SDHE"/>
    <property type="match status" value="1"/>
</dbReference>
<dbReference type="PANTHER" id="PTHR39585:SF1">
    <property type="entry name" value="FAD ASSEMBLY FACTOR SDHE"/>
    <property type="match status" value="1"/>
</dbReference>
<dbReference type="Pfam" id="PF03937">
    <property type="entry name" value="Sdh5"/>
    <property type="match status" value="1"/>
</dbReference>
<dbReference type="SUPFAM" id="SSF109910">
    <property type="entry name" value="YgfY-like"/>
    <property type="match status" value="1"/>
</dbReference>
<keyword id="KW-0143">Chaperone</keyword>
<keyword id="KW-0963">Cytoplasm</keyword>
<gene>
    <name type="primary">sdhE</name>
    <name type="ordered locus">lpp1536</name>
</gene>
<sequence>MDNREKSRLLWKCRRGMLELDLLLQKFIANEIDRLTENQLKAFDNLLTHNDPSLYAWLMGHEEPEKELLEIVSFIRNCD</sequence>
<name>SDHE_LEGPA</name>
<evidence type="ECO:0000250" key="1">
    <source>
        <dbReference type="UniProtKB" id="G4V4G2"/>
    </source>
</evidence>
<evidence type="ECO:0000305" key="2"/>
<proteinExistence type="inferred from homology"/>
<accession>Q5X4Y4</accession>
<organism>
    <name type="scientific">Legionella pneumophila (strain Paris)</name>
    <dbReference type="NCBI Taxonomy" id="297246"/>
    <lineage>
        <taxon>Bacteria</taxon>
        <taxon>Pseudomonadati</taxon>
        <taxon>Pseudomonadota</taxon>
        <taxon>Gammaproteobacteria</taxon>
        <taxon>Legionellales</taxon>
        <taxon>Legionellaceae</taxon>
        <taxon>Legionella</taxon>
    </lineage>
</organism>
<comment type="function">
    <text evidence="1">An FAD assembly protein, which accelerates covalent attachment of the cofactor into other proteins. Plays an essential role in the assembly of succinate dehydrogenase (SDH, respiratory complex II), an enzyme complex that is a component of both the tricarboxylic acid cycle and the electron transport chain, and which couples the oxidation of succinate to fumarate with the reduction of ubiquinone (coenzyme Q) to ubiquinol. Required for flavinylation (covalent attachment of FAD) of the flavoprotein subunit SdhA of SDH and other flavinylated proteins as well.</text>
</comment>
<comment type="subcellular location">
    <subcellularLocation>
        <location evidence="1">Cytoplasm</location>
    </subcellularLocation>
</comment>
<comment type="similarity">
    <text evidence="2">Belongs to the SdhE FAD assembly factor family.</text>
</comment>
<feature type="chain" id="PRO_0000214403" description="FAD assembly factor SdhE">
    <location>
        <begin position="1"/>
        <end position="79"/>
    </location>
</feature>
<protein>
    <recommendedName>
        <fullName>FAD assembly factor SdhE</fullName>
    </recommendedName>
</protein>